<protein>
    <recommendedName>
        <fullName>Histone chaperone asf1b-A</fullName>
    </recommendedName>
    <alternativeName>
        <fullName>Anti-silencing function protein 1 homolog Ba</fullName>
    </alternativeName>
</protein>
<organism>
    <name type="scientific">Danio rerio</name>
    <name type="common">Zebrafish</name>
    <name type="synonym">Brachydanio rerio</name>
    <dbReference type="NCBI Taxonomy" id="7955"/>
    <lineage>
        <taxon>Eukaryota</taxon>
        <taxon>Metazoa</taxon>
        <taxon>Chordata</taxon>
        <taxon>Craniata</taxon>
        <taxon>Vertebrata</taxon>
        <taxon>Euteleostomi</taxon>
        <taxon>Actinopterygii</taxon>
        <taxon>Neopterygii</taxon>
        <taxon>Teleostei</taxon>
        <taxon>Ostariophysi</taxon>
        <taxon>Cypriniformes</taxon>
        <taxon>Danionidae</taxon>
        <taxon>Danioninae</taxon>
        <taxon>Danio</taxon>
    </lineage>
</organism>
<accession>Q6NYY4</accession>
<gene>
    <name type="primary">asf1ba</name>
    <name type="synonym">asf1b</name>
</gene>
<sequence length="197" mass="21943">MAKVQVLNVAVLDNPSPFGNPFQFEITFECMEDLPEDLEWKIIYVGSAESEEYDQTLDSVLVGPVPAGRHMFVFQADAPNCSLIPETDAVGVTVVLITCTYRGQEFIRIGYYVNNEYTDTELRENPPLKPNYGQLQRNILASNPRVTRFHINWEGCAEKMEDSENVDPAPNAMLPPSCTPGKAPLLGLVPDNSMDCL</sequence>
<comment type="function">
    <text evidence="1">Histone chaperone that facilitates histone deposition and histone exchange and removal during nucleosome assembly and disassembly.</text>
</comment>
<comment type="subunit">
    <text evidence="1">Interacts with histone H3 and histone H4.</text>
</comment>
<comment type="subcellular location">
    <subcellularLocation>
        <location evidence="1">Nucleus</location>
    </subcellularLocation>
</comment>
<comment type="similarity">
    <text evidence="2">Belongs to the ASF1 family.</text>
</comment>
<evidence type="ECO:0000250" key="1"/>
<evidence type="ECO:0000305" key="2"/>
<feature type="chain" id="PRO_0000284019" description="Histone chaperone asf1b-A">
    <location>
        <begin position="1"/>
        <end position="197"/>
    </location>
</feature>
<name>AS1BA_DANRE</name>
<dbReference type="EMBL" id="BC066417">
    <property type="protein sequence ID" value="AAH66417.1"/>
    <property type="molecule type" value="mRNA"/>
</dbReference>
<dbReference type="RefSeq" id="NP_996946.1">
    <property type="nucleotide sequence ID" value="NM_207063.1"/>
</dbReference>
<dbReference type="SMR" id="Q6NYY4"/>
<dbReference type="FunCoup" id="Q6NYY4">
    <property type="interactions" value="2390"/>
</dbReference>
<dbReference type="STRING" id="7955.ENSDARP00000140363"/>
<dbReference type="PaxDb" id="7955-ENSDARP00000025843"/>
<dbReference type="Ensembl" id="ENSDART00000167179">
    <property type="protein sequence ID" value="ENSDARP00000140363"/>
    <property type="gene ID" value="ENSDARG00000101037"/>
</dbReference>
<dbReference type="GeneID" id="386897"/>
<dbReference type="KEGG" id="dre:386897"/>
<dbReference type="AGR" id="ZFIN:ZDB-GENE-031118-197"/>
<dbReference type="CTD" id="386897"/>
<dbReference type="ZFIN" id="ZDB-GENE-031118-197">
    <property type="gene designation" value="asf1ba"/>
</dbReference>
<dbReference type="eggNOG" id="KOG3265">
    <property type="taxonomic scope" value="Eukaryota"/>
</dbReference>
<dbReference type="HOGENOM" id="CLU_060354_1_2_1"/>
<dbReference type="InParanoid" id="Q6NYY4"/>
<dbReference type="OMA" id="DYADQEM"/>
<dbReference type="OrthoDB" id="29755at2759"/>
<dbReference type="PhylomeDB" id="Q6NYY4"/>
<dbReference type="TreeFam" id="TF106429"/>
<dbReference type="PRO" id="PR:Q6NYY4"/>
<dbReference type="Proteomes" id="UP000000437">
    <property type="component" value="Chromosome 3"/>
</dbReference>
<dbReference type="Bgee" id="ENSDARG00000101037">
    <property type="expression patterns" value="Expressed in mature ovarian follicle and 21 other cell types or tissues"/>
</dbReference>
<dbReference type="GO" id="GO:0000785">
    <property type="term" value="C:chromatin"/>
    <property type="evidence" value="ECO:0000318"/>
    <property type="project" value="GO_Central"/>
</dbReference>
<dbReference type="GO" id="GO:0005634">
    <property type="term" value="C:nucleus"/>
    <property type="evidence" value="ECO:0000318"/>
    <property type="project" value="GO_Central"/>
</dbReference>
<dbReference type="GO" id="GO:0042393">
    <property type="term" value="F:histone binding"/>
    <property type="evidence" value="ECO:0000318"/>
    <property type="project" value="GO_Central"/>
</dbReference>
<dbReference type="GO" id="GO:0006335">
    <property type="term" value="P:DNA replication-dependent chromatin assembly"/>
    <property type="evidence" value="ECO:0000318"/>
    <property type="project" value="GO_Central"/>
</dbReference>
<dbReference type="FunFam" id="2.60.40.1490:FF:000001">
    <property type="entry name" value="Histone chaperone ASF1"/>
    <property type="match status" value="1"/>
</dbReference>
<dbReference type="Gene3D" id="2.60.40.1490">
    <property type="entry name" value="Histone chaperone ASF1-like"/>
    <property type="match status" value="1"/>
</dbReference>
<dbReference type="InterPro" id="IPR006818">
    <property type="entry name" value="ASF1-like"/>
</dbReference>
<dbReference type="InterPro" id="IPR036747">
    <property type="entry name" value="ASF1-like_sf"/>
</dbReference>
<dbReference type="PANTHER" id="PTHR12040">
    <property type="entry name" value="ANTI-SILENCING PROTEIN 1"/>
    <property type="match status" value="1"/>
</dbReference>
<dbReference type="PANTHER" id="PTHR12040:SF22">
    <property type="entry name" value="HISTONE CHAPERONE ASF1B"/>
    <property type="match status" value="1"/>
</dbReference>
<dbReference type="Pfam" id="PF04729">
    <property type="entry name" value="ASF1_hist_chap"/>
    <property type="match status" value="1"/>
</dbReference>
<dbReference type="SUPFAM" id="SSF101546">
    <property type="entry name" value="ASF1-like"/>
    <property type="match status" value="1"/>
</dbReference>
<keyword id="KW-0143">Chaperone</keyword>
<keyword id="KW-0156">Chromatin regulator</keyword>
<keyword id="KW-0539">Nucleus</keyword>
<keyword id="KW-1185">Reference proteome</keyword>
<keyword id="KW-0804">Transcription</keyword>
<keyword id="KW-0805">Transcription regulation</keyword>
<reference key="1">
    <citation type="submission" date="2004-02" db="EMBL/GenBank/DDBJ databases">
        <authorList>
            <consortium name="NIH - Zebrafish Gene Collection (ZGC) project"/>
        </authorList>
    </citation>
    <scope>NUCLEOTIDE SEQUENCE [LARGE SCALE MRNA]</scope>
    <source>
        <tissue>Kidney</tissue>
    </source>
</reference>
<proteinExistence type="evidence at transcript level"/>